<protein>
    <recommendedName>
        <fullName evidence="1">Bifunctional protein FolD</fullName>
    </recommendedName>
    <domain>
        <recommendedName>
            <fullName evidence="1">Methylenetetrahydrofolate dehydrogenase</fullName>
            <ecNumber evidence="1">1.5.1.5</ecNumber>
        </recommendedName>
    </domain>
    <domain>
        <recommendedName>
            <fullName evidence="1">Methenyltetrahydrofolate cyclohydrolase</fullName>
            <ecNumber evidence="1">3.5.4.9</ecNumber>
        </recommendedName>
    </domain>
</protein>
<reference key="1">
    <citation type="journal article" date="2009" name="Proc. Natl. Acad. Sci. U.S.A.">
        <title>Hamiltonella defensa, genome evolution of protective bacterial endosymbiont from pathogenic ancestors.</title>
        <authorList>
            <person name="Degnan P.H."/>
            <person name="Yu Y."/>
            <person name="Sisneros N."/>
            <person name="Wing R.A."/>
            <person name="Moran N.A."/>
        </authorList>
    </citation>
    <scope>NUCLEOTIDE SEQUENCE [LARGE SCALE GENOMIC DNA]</scope>
    <source>
        <strain>5AT</strain>
    </source>
</reference>
<accession>C4K7E4</accession>
<dbReference type="EC" id="1.5.1.5" evidence="1"/>
<dbReference type="EC" id="3.5.4.9" evidence="1"/>
<dbReference type="EMBL" id="CP001277">
    <property type="protein sequence ID" value="ACQ68487.1"/>
    <property type="molecule type" value="Genomic_DNA"/>
</dbReference>
<dbReference type="RefSeq" id="WP_015874251.1">
    <property type="nucleotide sequence ID" value="NC_012751.1"/>
</dbReference>
<dbReference type="SMR" id="C4K7E4"/>
<dbReference type="STRING" id="572265.HDEF_1897"/>
<dbReference type="GeneID" id="66261477"/>
<dbReference type="KEGG" id="hde:HDEF_1897"/>
<dbReference type="eggNOG" id="COG0190">
    <property type="taxonomic scope" value="Bacteria"/>
</dbReference>
<dbReference type="HOGENOM" id="CLU_034045_2_1_6"/>
<dbReference type="UniPathway" id="UPA00193"/>
<dbReference type="Proteomes" id="UP000002334">
    <property type="component" value="Chromosome"/>
</dbReference>
<dbReference type="GO" id="GO:0005829">
    <property type="term" value="C:cytosol"/>
    <property type="evidence" value="ECO:0007669"/>
    <property type="project" value="TreeGrafter"/>
</dbReference>
<dbReference type="GO" id="GO:0004477">
    <property type="term" value="F:methenyltetrahydrofolate cyclohydrolase activity"/>
    <property type="evidence" value="ECO:0007669"/>
    <property type="project" value="UniProtKB-UniRule"/>
</dbReference>
<dbReference type="GO" id="GO:0004488">
    <property type="term" value="F:methylenetetrahydrofolate dehydrogenase (NADP+) activity"/>
    <property type="evidence" value="ECO:0007669"/>
    <property type="project" value="UniProtKB-UniRule"/>
</dbReference>
<dbReference type="GO" id="GO:0000105">
    <property type="term" value="P:L-histidine biosynthetic process"/>
    <property type="evidence" value="ECO:0007669"/>
    <property type="project" value="UniProtKB-KW"/>
</dbReference>
<dbReference type="GO" id="GO:0009086">
    <property type="term" value="P:methionine biosynthetic process"/>
    <property type="evidence" value="ECO:0007669"/>
    <property type="project" value="UniProtKB-KW"/>
</dbReference>
<dbReference type="GO" id="GO:0006164">
    <property type="term" value="P:purine nucleotide biosynthetic process"/>
    <property type="evidence" value="ECO:0007669"/>
    <property type="project" value="UniProtKB-KW"/>
</dbReference>
<dbReference type="GO" id="GO:0035999">
    <property type="term" value="P:tetrahydrofolate interconversion"/>
    <property type="evidence" value="ECO:0007669"/>
    <property type="project" value="UniProtKB-UniRule"/>
</dbReference>
<dbReference type="CDD" id="cd01080">
    <property type="entry name" value="NAD_bind_m-THF_DH_Cyclohyd"/>
    <property type="match status" value="1"/>
</dbReference>
<dbReference type="FunFam" id="3.40.50.10860:FF:000001">
    <property type="entry name" value="Bifunctional protein FolD"/>
    <property type="match status" value="1"/>
</dbReference>
<dbReference type="FunFam" id="3.40.50.720:FF:000006">
    <property type="entry name" value="Bifunctional protein FolD"/>
    <property type="match status" value="1"/>
</dbReference>
<dbReference type="Gene3D" id="3.40.50.10860">
    <property type="entry name" value="Leucine Dehydrogenase, chain A, domain 1"/>
    <property type="match status" value="1"/>
</dbReference>
<dbReference type="Gene3D" id="3.40.50.720">
    <property type="entry name" value="NAD(P)-binding Rossmann-like Domain"/>
    <property type="match status" value="1"/>
</dbReference>
<dbReference type="HAMAP" id="MF_01576">
    <property type="entry name" value="THF_DHG_CYH"/>
    <property type="match status" value="1"/>
</dbReference>
<dbReference type="InterPro" id="IPR046346">
    <property type="entry name" value="Aminoacid_DH-like_N_sf"/>
</dbReference>
<dbReference type="InterPro" id="IPR036291">
    <property type="entry name" value="NAD(P)-bd_dom_sf"/>
</dbReference>
<dbReference type="InterPro" id="IPR000672">
    <property type="entry name" value="THF_DH/CycHdrlase"/>
</dbReference>
<dbReference type="InterPro" id="IPR020630">
    <property type="entry name" value="THF_DH/CycHdrlase_cat_dom"/>
</dbReference>
<dbReference type="InterPro" id="IPR020867">
    <property type="entry name" value="THF_DH/CycHdrlase_CS"/>
</dbReference>
<dbReference type="InterPro" id="IPR020631">
    <property type="entry name" value="THF_DH/CycHdrlase_NAD-bd_dom"/>
</dbReference>
<dbReference type="NCBIfam" id="NF008058">
    <property type="entry name" value="PRK10792.1"/>
    <property type="match status" value="1"/>
</dbReference>
<dbReference type="NCBIfam" id="NF010783">
    <property type="entry name" value="PRK14186.1"/>
    <property type="match status" value="1"/>
</dbReference>
<dbReference type="PANTHER" id="PTHR48099:SF5">
    <property type="entry name" value="C-1-TETRAHYDROFOLATE SYNTHASE, CYTOPLASMIC"/>
    <property type="match status" value="1"/>
</dbReference>
<dbReference type="PANTHER" id="PTHR48099">
    <property type="entry name" value="C-1-TETRAHYDROFOLATE SYNTHASE, CYTOPLASMIC-RELATED"/>
    <property type="match status" value="1"/>
</dbReference>
<dbReference type="Pfam" id="PF00763">
    <property type="entry name" value="THF_DHG_CYH"/>
    <property type="match status" value="1"/>
</dbReference>
<dbReference type="Pfam" id="PF02882">
    <property type="entry name" value="THF_DHG_CYH_C"/>
    <property type="match status" value="1"/>
</dbReference>
<dbReference type="PRINTS" id="PR00085">
    <property type="entry name" value="THFDHDRGNASE"/>
</dbReference>
<dbReference type="SUPFAM" id="SSF53223">
    <property type="entry name" value="Aminoacid dehydrogenase-like, N-terminal domain"/>
    <property type="match status" value="1"/>
</dbReference>
<dbReference type="SUPFAM" id="SSF51735">
    <property type="entry name" value="NAD(P)-binding Rossmann-fold domains"/>
    <property type="match status" value="1"/>
</dbReference>
<dbReference type="PROSITE" id="PS00767">
    <property type="entry name" value="THF_DHG_CYH_2"/>
    <property type="match status" value="1"/>
</dbReference>
<comment type="function">
    <text evidence="1">Catalyzes the oxidation of 5,10-methylenetetrahydrofolate to 5,10-methenyltetrahydrofolate and then the hydrolysis of 5,10-methenyltetrahydrofolate to 10-formyltetrahydrofolate.</text>
</comment>
<comment type="catalytic activity">
    <reaction evidence="1">
        <text>(6R)-5,10-methylene-5,6,7,8-tetrahydrofolate + NADP(+) = (6R)-5,10-methenyltetrahydrofolate + NADPH</text>
        <dbReference type="Rhea" id="RHEA:22812"/>
        <dbReference type="ChEBI" id="CHEBI:15636"/>
        <dbReference type="ChEBI" id="CHEBI:57455"/>
        <dbReference type="ChEBI" id="CHEBI:57783"/>
        <dbReference type="ChEBI" id="CHEBI:58349"/>
        <dbReference type="EC" id="1.5.1.5"/>
    </reaction>
</comment>
<comment type="catalytic activity">
    <reaction evidence="1">
        <text>(6R)-5,10-methenyltetrahydrofolate + H2O = (6R)-10-formyltetrahydrofolate + H(+)</text>
        <dbReference type="Rhea" id="RHEA:23700"/>
        <dbReference type="ChEBI" id="CHEBI:15377"/>
        <dbReference type="ChEBI" id="CHEBI:15378"/>
        <dbReference type="ChEBI" id="CHEBI:57455"/>
        <dbReference type="ChEBI" id="CHEBI:195366"/>
        <dbReference type="EC" id="3.5.4.9"/>
    </reaction>
</comment>
<comment type="pathway">
    <text evidence="1">One-carbon metabolism; tetrahydrofolate interconversion.</text>
</comment>
<comment type="subunit">
    <text evidence="1">Homodimer.</text>
</comment>
<comment type="similarity">
    <text evidence="1">Belongs to the tetrahydrofolate dehydrogenase/cyclohydrolase family.</text>
</comment>
<gene>
    <name evidence="1" type="primary">folD</name>
    <name type="ordered locus">HDEF_1897</name>
</gene>
<feature type="chain" id="PRO_1000215599" description="Bifunctional protein FolD">
    <location>
        <begin position="1"/>
        <end position="283"/>
    </location>
</feature>
<feature type="binding site" evidence="1">
    <location>
        <begin position="166"/>
        <end position="168"/>
    </location>
    <ligand>
        <name>NADP(+)</name>
        <dbReference type="ChEBI" id="CHEBI:58349"/>
    </ligand>
</feature>
<feature type="binding site" evidence="1">
    <location>
        <position position="232"/>
    </location>
    <ligand>
        <name>NADP(+)</name>
        <dbReference type="ChEBI" id="CHEBI:58349"/>
    </ligand>
</feature>
<proteinExistence type="inferred from homology"/>
<evidence type="ECO:0000255" key="1">
    <source>
        <dbReference type="HAMAP-Rule" id="MF_01576"/>
    </source>
</evidence>
<name>FOLD_HAMD5</name>
<organism>
    <name type="scientific">Hamiltonella defensa subsp. Acyrthosiphon pisum (strain 5AT)</name>
    <dbReference type="NCBI Taxonomy" id="572265"/>
    <lineage>
        <taxon>Bacteria</taxon>
        <taxon>Pseudomonadati</taxon>
        <taxon>Pseudomonadota</taxon>
        <taxon>Gammaproteobacteria</taxon>
        <taxon>Enterobacterales</taxon>
        <taxon>Enterobacteriaceae</taxon>
        <taxon>aphid secondary symbionts</taxon>
        <taxon>Candidatus Hamiltonella</taxon>
    </lineage>
</organism>
<sequence>MSAKIMDGKSIAQQIKNEVAHGVQKRLKQGKRAPGLAVILIGENSASQIYVANKRKACEEVGFVSHCYPLPETTSKAELVSLIKQLNQDPEIDGILVQLPLPERFDSANMLEQIRPDKDVDGFHPYNIGSLCQRIPKLRPCTPLGIMTLLARYDLDPCGLNALVVGASNIVGRPMSLELLLAGCTTTVAHRFTQHLQQHVENADLLVVAVGKPSFIPGTWIKPGAIVIDVGINRLQNGRVVGDVEFDMAATRAAWITPVPGGVGPMTVASLLQNTLKACMERT</sequence>
<keyword id="KW-0028">Amino-acid biosynthesis</keyword>
<keyword id="KW-0368">Histidine biosynthesis</keyword>
<keyword id="KW-0378">Hydrolase</keyword>
<keyword id="KW-0486">Methionine biosynthesis</keyword>
<keyword id="KW-0511">Multifunctional enzyme</keyword>
<keyword id="KW-0521">NADP</keyword>
<keyword id="KW-0554">One-carbon metabolism</keyword>
<keyword id="KW-0560">Oxidoreductase</keyword>
<keyword id="KW-0658">Purine biosynthesis</keyword>